<name>RBFA_FRAAA</name>
<gene>
    <name evidence="1" type="primary">rbfA</name>
    <name type="ordered locus">FRAAL5758</name>
</gene>
<evidence type="ECO:0000255" key="1">
    <source>
        <dbReference type="HAMAP-Rule" id="MF_00003"/>
    </source>
</evidence>
<evidence type="ECO:0000256" key="2">
    <source>
        <dbReference type="SAM" id="MobiDB-lite"/>
    </source>
</evidence>
<reference key="1">
    <citation type="journal article" date="2007" name="Genome Res.">
        <title>Genome characteristics of facultatively symbiotic Frankia sp. strains reflect host range and host plant biogeography.</title>
        <authorList>
            <person name="Normand P."/>
            <person name="Lapierre P."/>
            <person name="Tisa L.S."/>
            <person name="Gogarten J.P."/>
            <person name="Alloisio N."/>
            <person name="Bagnarol E."/>
            <person name="Bassi C.A."/>
            <person name="Berry A.M."/>
            <person name="Bickhart D.M."/>
            <person name="Choisne N."/>
            <person name="Couloux A."/>
            <person name="Cournoyer B."/>
            <person name="Cruveiller S."/>
            <person name="Daubin V."/>
            <person name="Demange N."/>
            <person name="Francino M.P."/>
            <person name="Goltsman E."/>
            <person name="Huang Y."/>
            <person name="Kopp O.R."/>
            <person name="Labarre L."/>
            <person name="Lapidus A."/>
            <person name="Lavire C."/>
            <person name="Marechal J."/>
            <person name="Martinez M."/>
            <person name="Mastronunzio J.E."/>
            <person name="Mullin B.C."/>
            <person name="Niemann J."/>
            <person name="Pujic P."/>
            <person name="Rawnsley T."/>
            <person name="Rouy Z."/>
            <person name="Schenowitz C."/>
            <person name="Sellstedt A."/>
            <person name="Tavares F."/>
            <person name="Tomkins J.P."/>
            <person name="Vallenet D."/>
            <person name="Valverde C."/>
            <person name="Wall L.G."/>
            <person name="Wang Y."/>
            <person name="Medigue C."/>
            <person name="Benson D.R."/>
        </authorList>
    </citation>
    <scope>NUCLEOTIDE SEQUENCE [LARGE SCALE GENOMIC DNA]</scope>
    <source>
        <strain>DSM 45986 / CECT 9034 / ACN14a</strain>
    </source>
</reference>
<protein>
    <recommendedName>
        <fullName evidence="1">Ribosome-binding factor A</fullName>
    </recommendedName>
</protein>
<keyword id="KW-0963">Cytoplasm</keyword>
<keyword id="KW-1185">Reference proteome</keyword>
<keyword id="KW-0690">Ribosome biogenesis</keyword>
<dbReference type="EMBL" id="CT573213">
    <property type="protein sequence ID" value="CAJ64390.1"/>
    <property type="molecule type" value="Genomic_DNA"/>
</dbReference>
<dbReference type="RefSeq" id="WP_011606831.1">
    <property type="nucleotide sequence ID" value="NC_008278.1"/>
</dbReference>
<dbReference type="SMR" id="Q0RDS6"/>
<dbReference type="STRING" id="326424.FRAAL5758"/>
<dbReference type="KEGG" id="fal:FRAAL5758"/>
<dbReference type="eggNOG" id="COG0858">
    <property type="taxonomic scope" value="Bacteria"/>
</dbReference>
<dbReference type="HOGENOM" id="CLU_089475_0_0_11"/>
<dbReference type="OrthoDB" id="307788at2"/>
<dbReference type="Proteomes" id="UP000000657">
    <property type="component" value="Chromosome"/>
</dbReference>
<dbReference type="GO" id="GO:0005829">
    <property type="term" value="C:cytosol"/>
    <property type="evidence" value="ECO:0007669"/>
    <property type="project" value="TreeGrafter"/>
</dbReference>
<dbReference type="GO" id="GO:0043024">
    <property type="term" value="F:ribosomal small subunit binding"/>
    <property type="evidence" value="ECO:0007669"/>
    <property type="project" value="TreeGrafter"/>
</dbReference>
<dbReference type="GO" id="GO:0030490">
    <property type="term" value="P:maturation of SSU-rRNA"/>
    <property type="evidence" value="ECO:0007669"/>
    <property type="project" value="UniProtKB-UniRule"/>
</dbReference>
<dbReference type="Gene3D" id="3.30.300.20">
    <property type="match status" value="1"/>
</dbReference>
<dbReference type="HAMAP" id="MF_00003">
    <property type="entry name" value="RbfA"/>
    <property type="match status" value="1"/>
</dbReference>
<dbReference type="InterPro" id="IPR015946">
    <property type="entry name" value="KH_dom-like_a/b"/>
</dbReference>
<dbReference type="InterPro" id="IPR000238">
    <property type="entry name" value="RbfA"/>
</dbReference>
<dbReference type="InterPro" id="IPR023799">
    <property type="entry name" value="RbfA_dom_sf"/>
</dbReference>
<dbReference type="InterPro" id="IPR020053">
    <property type="entry name" value="Ribosome-bd_factorA_CS"/>
</dbReference>
<dbReference type="NCBIfam" id="TIGR00082">
    <property type="entry name" value="rbfA"/>
    <property type="match status" value="1"/>
</dbReference>
<dbReference type="PANTHER" id="PTHR33515">
    <property type="entry name" value="RIBOSOME-BINDING FACTOR A, CHLOROPLASTIC-RELATED"/>
    <property type="match status" value="1"/>
</dbReference>
<dbReference type="PANTHER" id="PTHR33515:SF1">
    <property type="entry name" value="RIBOSOME-BINDING FACTOR A, CHLOROPLASTIC-RELATED"/>
    <property type="match status" value="1"/>
</dbReference>
<dbReference type="Pfam" id="PF02033">
    <property type="entry name" value="RBFA"/>
    <property type="match status" value="1"/>
</dbReference>
<dbReference type="SUPFAM" id="SSF89919">
    <property type="entry name" value="Ribosome-binding factor A, RbfA"/>
    <property type="match status" value="1"/>
</dbReference>
<dbReference type="PROSITE" id="PS01319">
    <property type="entry name" value="RBFA"/>
    <property type="match status" value="1"/>
</dbReference>
<organism>
    <name type="scientific">Frankia alni (strain DSM 45986 / CECT 9034 / ACN14a)</name>
    <dbReference type="NCBI Taxonomy" id="326424"/>
    <lineage>
        <taxon>Bacteria</taxon>
        <taxon>Bacillati</taxon>
        <taxon>Actinomycetota</taxon>
        <taxon>Actinomycetes</taxon>
        <taxon>Frankiales</taxon>
        <taxon>Frankiaceae</taxon>
        <taxon>Frankia</taxon>
    </lineage>
</organism>
<comment type="function">
    <text evidence="1">One of several proteins that assist in the late maturation steps of the functional core of the 30S ribosomal subunit. Associates with free 30S ribosomal subunits (but not with 30S subunits that are part of 70S ribosomes or polysomes). Required for efficient processing of 16S rRNA. May interact with the 5'-terminal helix region of 16S rRNA.</text>
</comment>
<comment type="subunit">
    <text evidence="1">Monomer. Binds 30S ribosomal subunits, but not 50S ribosomal subunits or 70S ribosomes.</text>
</comment>
<comment type="subcellular location">
    <subcellularLocation>
        <location evidence="1">Cytoplasm</location>
    </subcellularLocation>
</comment>
<comment type="similarity">
    <text evidence="1">Belongs to the RbfA family.</text>
</comment>
<accession>Q0RDS6</accession>
<sequence>MADPARARKLAVRIREVVASALERGVKDPRLGMVTVTEVRVTPDLVDATVFYTVYGDEDARRASAEALESARGLLRSQVGRATGVKVTPTLTFVHDRLPDDAKHLEDLISVARERDARLAEVRRDARPAGDEDPYRRPRTVDEDDEDEDEDLVDEFDEFDRVEELDADAGDALGGDAGAREAGASAGRQVYPASPGGDPTAGR</sequence>
<feature type="chain" id="PRO_0000329327" description="Ribosome-binding factor A">
    <location>
        <begin position="1"/>
        <end position="203"/>
    </location>
</feature>
<feature type="region of interest" description="Disordered" evidence="2">
    <location>
        <begin position="119"/>
        <end position="203"/>
    </location>
</feature>
<feature type="compositionally biased region" description="Basic and acidic residues" evidence="2">
    <location>
        <begin position="119"/>
        <end position="141"/>
    </location>
</feature>
<feature type="compositionally biased region" description="Acidic residues" evidence="2">
    <location>
        <begin position="142"/>
        <end position="169"/>
    </location>
</feature>
<proteinExistence type="inferred from homology"/>